<evidence type="ECO:0000250" key="1">
    <source>
        <dbReference type="UniProtKB" id="Q53GT1"/>
    </source>
</evidence>
<evidence type="ECO:0000255" key="2">
    <source>
        <dbReference type="PROSITE-ProRule" id="PRU00037"/>
    </source>
</evidence>
<evidence type="ECO:0000256" key="3">
    <source>
        <dbReference type="SAM" id="MobiDB-lite"/>
    </source>
</evidence>
<evidence type="ECO:0000305" key="4"/>
<evidence type="ECO:0000312" key="5">
    <source>
        <dbReference type="RGD" id="1306288"/>
    </source>
</evidence>
<evidence type="ECO:0007744" key="6">
    <source>
    </source>
</evidence>
<proteinExistence type="evidence at protein level"/>
<dbReference type="EMBL" id="CH473999">
    <property type="protein sequence ID" value="EDL77904.1"/>
    <property type="molecule type" value="Genomic_DNA"/>
</dbReference>
<dbReference type="RefSeq" id="NP_001100549.1">
    <property type="nucleotide sequence ID" value="NM_001107079.1"/>
</dbReference>
<dbReference type="RefSeq" id="XP_006248763.1">
    <property type="nucleotide sequence ID" value="XM_006248701.3"/>
</dbReference>
<dbReference type="SMR" id="D3ZZC3"/>
<dbReference type="BioGRID" id="257676">
    <property type="interactions" value="1"/>
</dbReference>
<dbReference type="FunCoup" id="D3ZZC3">
    <property type="interactions" value="1654"/>
</dbReference>
<dbReference type="STRING" id="10116.ENSRNOP00000075207"/>
<dbReference type="iPTMnet" id="D3ZZC3"/>
<dbReference type="PhosphoSitePlus" id="D3ZZC3"/>
<dbReference type="jPOST" id="D3ZZC3"/>
<dbReference type="PaxDb" id="10116-ENSRNOP00000063573"/>
<dbReference type="PeptideAtlas" id="D3ZZC3"/>
<dbReference type="GeneID" id="303792"/>
<dbReference type="KEGG" id="rno:303792"/>
<dbReference type="AGR" id="RGD:1306288"/>
<dbReference type="CTD" id="84861"/>
<dbReference type="RGD" id="1306288">
    <property type="gene designation" value="Klhl22"/>
</dbReference>
<dbReference type="VEuPathDB" id="HostDB:ENSRNOG00000001878"/>
<dbReference type="eggNOG" id="KOG4441">
    <property type="taxonomic scope" value="Eukaryota"/>
</dbReference>
<dbReference type="HOGENOM" id="CLU_004253_14_3_1"/>
<dbReference type="InParanoid" id="D3ZZC3"/>
<dbReference type="OrthoDB" id="45365at2759"/>
<dbReference type="PhylomeDB" id="D3ZZC3"/>
<dbReference type="Reactome" id="R-RNO-8951664">
    <property type="pathway name" value="Neddylation"/>
</dbReference>
<dbReference type="Reactome" id="R-RNO-983168">
    <property type="pathway name" value="Antigen processing: Ubiquitination &amp; Proteasome degradation"/>
</dbReference>
<dbReference type="UniPathway" id="UPA00143"/>
<dbReference type="PRO" id="PR:D3ZZC3"/>
<dbReference type="Proteomes" id="UP000002494">
    <property type="component" value="Chromosome 11"/>
</dbReference>
<dbReference type="Proteomes" id="UP000234681">
    <property type="component" value="Chromosome 11"/>
</dbReference>
<dbReference type="Bgee" id="ENSRNOG00000001878">
    <property type="expression patterns" value="Expressed in skeletal muscle tissue and 19 other cell types or tissues"/>
</dbReference>
<dbReference type="ExpressionAtlas" id="D3ZZC3">
    <property type="expression patterns" value="baseline and differential"/>
</dbReference>
<dbReference type="GO" id="GO:0005813">
    <property type="term" value="C:centrosome"/>
    <property type="evidence" value="ECO:0000250"/>
    <property type="project" value="UniProtKB"/>
</dbReference>
<dbReference type="GO" id="GO:0031463">
    <property type="term" value="C:Cul3-RING ubiquitin ligase complex"/>
    <property type="evidence" value="ECO:0000250"/>
    <property type="project" value="UniProtKB"/>
</dbReference>
<dbReference type="GO" id="GO:0005737">
    <property type="term" value="C:cytoplasm"/>
    <property type="evidence" value="ECO:0000250"/>
    <property type="project" value="UniProtKB"/>
</dbReference>
<dbReference type="GO" id="GO:0005829">
    <property type="term" value="C:cytosol"/>
    <property type="evidence" value="ECO:0000250"/>
    <property type="project" value="UniProtKB"/>
</dbReference>
<dbReference type="GO" id="GO:0005764">
    <property type="term" value="C:lysosome"/>
    <property type="evidence" value="ECO:0000266"/>
    <property type="project" value="RGD"/>
</dbReference>
<dbReference type="GO" id="GO:0072686">
    <property type="term" value="C:mitotic spindle"/>
    <property type="evidence" value="ECO:0000250"/>
    <property type="project" value="UniProtKB"/>
</dbReference>
<dbReference type="GO" id="GO:0005634">
    <property type="term" value="C:nucleus"/>
    <property type="evidence" value="ECO:0000266"/>
    <property type="project" value="RGD"/>
</dbReference>
<dbReference type="GO" id="GO:0005827">
    <property type="term" value="C:polar microtubule"/>
    <property type="evidence" value="ECO:0000250"/>
    <property type="project" value="UniProtKB"/>
</dbReference>
<dbReference type="GO" id="GO:0071889">
    <property type="term" value="F:14-3-3 protein binding"/>
    <property type="evidence" value="ECO:0000266"/>
    <property type="project" value="RGD"/>
</dbReference>
<dbReference type="GO" id="GO:1990756">
    <property type="term" value="F:ubiquitin-like ligase-substrate adaptor activity"/>
    <property type="evidence" value="ECO:0000266"/>
    <property type="project" value="RGD"/>
</dbReference>
<dbReference type="GO" id="GO:0051301">
    <property type="term" value="P:cell division"/>
    <property type="evidence" value="ECO:0000250"/>
    <property type="project" value="UniProtKB"/>
</dbReference>
<dbReference type="GO" id="GO:0071230">
    <property type="term" value="P:cellular response to amino acid stimulus"/>
    <property type="evidence" value="ECO:0000266"/>
    <property type="project" value="RGD"/>
</dbReference>
<dbReference type="GO" id="GO:0071233">
    <property type="term" value="P:cellular response to L-leucine"/>
    <property type="evidence" value="ECO:0000250"/>
    <property type="project" value="UniProtKB"/>
</dbReference>
<dbReference type="GO" id="GO:0000070">
    <property type="term" value="P:mitotic sister chromatid segregation"/>
    <property type="evidence" value="ECO:0000250"/>
    <property type="project" value="UniProtKB"/>
</dbReference>
<dbReference type="GO" id="GO:0007094">
    <property type="term" value="P:mitotic spindle assembly checkpoint signaling"/>
    <property type="evidence" value="ECO:0000250"/>
    <property type="project" value="UniProtKB"/>
</dbReference>
<dbReference type="GO" id="GO:0010507">
    <property type="term" value="P:negative regulation of autophagy"/>
    <property type="evidence" value="ECO:0000250"/>
    <property type="project" value="UniProtKB"/>
</dbReference>
<dbReference type="GO" id="GO:0032480">
    <property type="term" value="P:negative regulation of type I interferon production"/>
    <property type="evidence" value="ECO:0000266"/>
    <property type="project" value="RGD"/>
</dbReference>
<dbReference type="GO" id="GO:0030307">
    <property type="term" value="P:positive regulation of cell growth"/>
    <property type="evidence" value="ECO:0000250"/>
    <property type="project" value="UniProtKB"/>
</dbReference>
<dbReference type="GO" id="GO:0050870">
    <property type="term" value="P:positive regulation of T cell activation"/>
    <property type="evidence" value="ECO:0000266"/>
    <property type="project" value="RGD"/>
</dbReference>
<dbReference type="GO" id="GO:0002842">
    <property type="term" value="P:positive regulation of T cell mediated immune response to tumor cell"/>
    <property type="evidence" value="ECO:0000266"/>
    <property type="project" value="RGD"/>
</dbReference>
<dbReference type="GO" id="GO:1904263">
    <property type="term" value="P:positive regulation of TORC1 signaling"/>
    <property type="evidence" value="ECO:0000250"/>
    <property type="project" value="UniProtKB"/>
</dbReference>
<dbReference type="GO" id="GO:0043161">
    <property type="term" value="P:proteasome-mediated ubiquitin-dependent protein catabolic process"/>
    <property type="evidence" value="ECO:0000250"/>
    <property type="project" value="UniProtKB"/>
</dbReference>
<dbReference type="GO" id="GO:0006513">
    <property type="term" value="P:protein monoubiquitination"/>
    <property type="evidence" value="ECO:0000250"/>
    <property type="project" value="UniProtKB"/>
</dbReference>
<dbReference type="GO" id="GO:0006511">
    <property type="term" value="P:ubiquitin-dependent protein catabolic process"/>
    <property type="evidence" value="ECO:0000266"/>
    <property type="project" value="RGD"/>
</dbReference>
<dbReference type="CDD" id="cd18461">
    <property type="entry name" value="BACK_KLHL22"/>
    <property type="match status" value="1"/>
</dbReference>
<dbReference type="FunFam" id="1.25.40.420:FF:000018">
    <property type="entry name" value="Kelch-like family member 22"/>
    <property type="match status" value="1"/>
</dbReference>
<dbReference type="FunFam" id="2.120.10.80:FF:000040">
    <property type="entry name" value="Kelch-like family member 22"/>
    <property type="match status" value="1"/>
</dbReference>
<dbReference type="FunFam" id="3.30.710.10:FF:000083">
    <property type="entry name" value="Kelch-like family member 22"/>
    <property type="match status" value="1"/>
</dbReference>
<dbReference type="Gene3D" id="1.25.40.420">
    <property type="match status" value="1"/>
</dbReference>
<dbReference type="Gene3D" id="2.120.10.80">
    <property type="entry name" value="Kelch-type beta propeller"/>
    <property type="match status" value="1"/>
</dbReference>
<dbReference type="Gene3D" id="3.30.710.10">
    <property type="entry name" value="Potassium Channel Kv1.1, Chain A"/>
    <property type="match status" value="1"/>
</dbReference>
<dbReference type="InterPro" id="IPR011705">
    <property type="entry name" value="BACK"/>
</dbReference>
<dbReference type="InterPro" id="IPR017096">
    <property type="entry name" value="BTB-kelch_protein"/>
</dbReference>
<dbReference type="InterPro" id="IPR000210">
    <property type="entry name" value="BTB/POZ_dom"/>
</dbReference>
<dbReference type="InterPro" id="IPR015915">
    <property type="entry name" value="Kelch-typ_b-propeller"/>
</dbReference>
<dbReference type="InterPro" id="IPR006652">
    <property type="entry name" value="Kelch_1"/>
</dbReference>
<dbReference type="InterPro" id="IPR030575">
    <property type="entry name" value="KLHL22_BACK"/>
</dbReference>
<dbReference type="InterPro" id="IPR011333">
    <property type="entry name" value="SKP1/BTB/POZ_sf"/>
</dbReference>
<dbReference type="PANTHER" id="PTHR45632:SF5">
    <property type="entry name" value="KELCH-LIKE PROTEIN 22"/>
    <property type="match status" value="1"/>
</dbReference>
<dbReference type="PANTHER" id="PTHR45632">
    <property type="entry name" value="LD33804P"/>
    <property type="match status" value="1"/>
</dbReference>
<dbReference type="Pfam" id="PF07707">
    <property type="entry name" value="BACK"/>
    <property type="match status" value="1"/>
</dbReference>
<dbReference type="Pfam" id="PF00651">
    <property type="entry name" value="BTB"/>
    <property type="match status" value="1"/>
</dbReference>
<dbReference type="Pfam" id="PF01344">
    <property type="entry name" value="Kelch_1"/>
    <property type="match status" value="1"/>
</dbReference>
<dbReference type="Pfam" id="PF24681">
    <property type="entry name" value="Kelch_KLHDC2_KLHL20_DRC7"/>
    <property type="match status" value="1"/>
</dbReference>
<dbReference type="PIRSF" id="PIRSF037037">
    <property type="entry name" value="Kelch-like_protein_gigaxonin"/>
    <property type="match status" value="1"/>
</dbReference>
<dbReference type="SMART" id="SM00875">
    <property type="entry name" value="BACK"/>
    <property type="match status" value="1"/>
</dbReference>
<dbReference type="SMART" id="SM00225">
    <property type="entry name" value="BTB"/>
    <property type="match status" value="1"/>
</dbReference>
<dbReference type="SMART" id="SM00612">
    <property type="entry name" value="Kelch"/>
    <property type="match status" value="6"/>
</dbReference>
<dbReference type="SUPFAM" id="SSF117281">
    <property type="entry name" value="Kelch motif"/>
    <property type="match status" value="1"/>
</dbReference>
<dbReference type="SUPFAM" id="SSF54695">
    <property type="entry name" value="POZ domain"/>
    <property type="match status" value="1"/>
</dbReference>
<dbReference type="PROSITE" id="PS50097">
    <property type="entry name" value="BTB"/>
    <property type="match status" value="1"/>
</dbReference>
<organism>
    <name type="scientific">Rattus norvegicus</name>
    <name type="common">Rat</name>
    <dbReference type="NCBI Taxonomy" id="10116"/>
    <lineage>
        <taxon>Eukaryota</taxon>
        <taxon>Metazoa</taxon>
        <taxon>Chordata</taxon>
        <taxon>Craniata</taxon>
        <taxon>Vertebrata</taxon>
        <taxon>Euteleostomi</taxon>
        <taxon>Mammalia</taxon>
        <taxon>Eutheria</taxon>
        <taxon>Euarchontoglires</taxon>
        <taxon>Glires</taxon>
        <taxon>Rodentia</taxon>
        <taxon>Myomorpha</taxon>
        <taxon>Muroidea</taxon>
        <taxon>Muridae</taxon>
        <taxon>Murinae</taxon>
        <taxon>Rattus</taxon>
    </lineage>
</organism>
<reference key="1">
    <citation type="submission" date="2005-09" db="EMBL/GenBank/DDBJ databases">
        <authorList>
            <person name="Mural R.J."/>
            <person name="Adams M.D."/>
            <person name="Myers E.W."/>
            <person name="Smith H.O."/>
            <person name="Venter J.C."/>
        </authorList>
    </citation>
    <scope>NUCLEOTIDE SEQUENCE [LARGE SCALE GENOMIC DNA]</scope>
    <source>
        <strain>Brown Norway</strain>
    </source>
</reference>
<reference key="2">
    <citation type="journal article" date="2006" name="Proc. Natl. Acad. Sci. U.S.A.">
        <title>Quantitative phosphoproteomics of vasopressin-sensitive renal cells: regulation of aquaporin-2 phosphorylation at two sites.</title>
        <authorList>
            <person name="Hoffert J.D."/>
            <person name="Pisitkun T."/>
            <person name="Wang G."/>
            <person name="Shen R.-F."/>
            <person name="Knepper M.A."/>
        </authorList>
    </citation>
    <scope>PHOSPHORYLATION [LARGE SCALE ANALYSIS] AT THR-463; TYR-466 AND THR-475</scope>
    <scope>IDENTIFICATION BY MASS SPECTROMETRY [LARGE SCALE ANALYSIS]</scope>
</reference>
<name>KLH22_RAT</name>
<comment type="function">
    <text evidence="1">Substrate-specific adapter of a BCR (BTB-CUL3-RBX1) E3 ubiquitin ligase complex required for chromosome alignment and localization of PLK1 at kinetochores. The BCR(KLHL22) ubiquitin ligase complex mediates monoubiquitination of PLK1, leading to PLK1 dissociation from phosphoreceptor proteins and subsequent removal from kinetochores, allowing silencing of the spindle assembly checkpoint (SAC) and chromosome segregation. Monoubiquitination of PLK1 does not lead to PLK1 degradation. The BCR(KLHL22) ubiquitin ligase complex is also responsible for the amino acid-stimulated 'Lys-48' polyubiquitination and proteasomal degradation of DEPDC5. Through the degradation of DEPDC5, releases the GATOR1 complex-mediated inhibition of the TORC1 pathway. It is therefore an amino acid-dependent activator within the amino acid-sensing branch of the TORC1 pathway, indirectly regulating different cellular processes including cell growth and autophagy.</text>
</comment>
<comment type="pathway">
    <text evidence="1">Protein modification; protein ubiquitination.</text>
</comment>
<comment type="subunit">
    <text evidence="1">Component of the BCR(KLHL22) E3 ubiquitin ligase complex, at least composed of CUL3, KLHL22 and RBX1. Interacts with PLK1. Interacts with DEPDC5 (via DEP domain); the interaction depends on amino acid availability. Interacts with YWHAE; required for the nuclear localization of KLHL22 upon amino acid starvation.</text>
</comment>
<comment type="subcellular location">
    <subcellularLocation>
        <location evidence="1">Cytoplasm</location>
        <location evidence="1">Cytosol</location>
    </subcellularLocation>
    <subcellularLocation>
        <location evidence="1">Cytoplasm</location>
        <location evidence="1">Cytoskeleton</location>
        <location evidence="1">Microtubule organizing center</location>
        <location evidence="1">Centrosome</location>
    </subcellularLocation>
    <subcellularLocation>
        <location evidence="1">Cytoplasm</location>
        <location evidence="1">Cytoskeleton</location>
        <location evidence="1">Spindle</location>
    </subcellularLocation>
    <subcellularLocation>
        <location evidence="1">Nucleus</location>
    </subcellularLocation>
    <subcellularLocation>
        <location evidence="1">Lysosome</location>
    </subcellularLocation>
    <text evidence="1">Mainly cytoplasmic in prophase and prometaphase. Associates with the mitotic spindle as the cells reach chromosome bi-orientation. Localizes to the centrosomes shortly before cells enter anaphase After anaphase onset, predominantly associates with the polar microtubules connecting the 2 opposing centrosomes and gradually diffuses into the cytoplasm during telophase. Localizes to the nucleus upon amino acid starvation. Relocalizes to the cytosol and associates with lysosomes when amino acids are available.</text>
</comment>
<feature type="initiator methionine" description="Removed" evidence="1">
    <location>
        <position position="1"/>
    </location>
</feature>
<feature type="chain" id="PRO_0000396635" description="Kelch-like protein 22">
    <location>
        <begin position="2"/>
        <end position="634"/>
    </location>
</feature>
<feature type="domain" description="BTB" evidence="2">
    <location>
        <begin position="50"/>
        <end position="117"/>
    </location>
</feature>
<feature type="repeat" description="Kelch 1">
    <location>
        <begin position="299"/>
        <end position="349"/>
    </location>
</feature>
<feature type="repeat" description="Kelch 2">
    <location>
        <begin position="350"/>
        <end position="399"/>
    </location>
</feature>
<feature type="repeat" description="Kelch 3">
    <location>
        <begin position="400"/>
        <end position="446"/>
    </location>
</feature>
<feature type="repeat" description="Kelch 4">
    <location>
        <begin position="448"/>
        <end position="493"/>
    </location>
</feature>
<feature type="repeat" description="Kelch 5">
    <location>
        <begin position="494"/>
        <end position="544"/>
    </location>
</feature>
<feature type="repeat" description="Kelch 6">
    <location>
        <begin position="545"/>
        <end position="593"/>
    </location>
</feature>
<feature type="region of interest" description="Disordered" evidence="3">
    <location>
        <begin position="600"/>
        <end position="634"/>
    </location>
</feature>
<feature type="compositionally biased region" description="Acidic residues" evidence="3">
    <location>
        <begin position="624"/>
        <end position="634"/>
    </location>
</feature>
<feature type="modified residue" description="N-acetylalanine" evidence="1">
    <location>
        <position position="2"/>
    </location>
</feature>
<feature type="modified residue" description="Phosphothreonine" evidence="6">
    <location>
        <position position="463"/>
    </location>
</feature>
<feature type="modified residue" description="Phosphotyrosine" evidence="6">
    <location>
        <position position="466"/>
    </location>
</feature>
<feature type="modified residue" description="Phosphothreonine" evidence="6">
    <location>
        <position position="475"/>
    </location>
</feature>
<feature type="modified residue" description="Phosphothreonine" evidence="1">
    <location>
        <position position="605"/>
    </location>
</feature>
<gene>
    <name evidence="5" type="primary">Klhl22</name>
</gene>
<keyword id="KW-0007">Acetylation</keyword>
<keyword id="KW-0131">Cell cycle</keyword>
<keyword id="KW-0132">Cell division</keyword>
<keyword id="KW-0963">Cytoplasm</keyword>
<keyword id="KW-0206">Cytoskeleton</keyword>
<keyword id="KW-0880">Kelch repeat</keyword>
<keyword id="KW-0458">Lysosome</keyword>
<keyword id="KW-0498">Mitosis</keyword>
<keyword id="KW-0539">Nucleus</keyword>
<keyword id="KW-0597">Phosphoprotein</keyword>
<keyword id="KW-1185">Reference proteome</keyword>
<keyword id="KW-0677">Repeat</keyword>
<keyword id="KW-0833">Ubl conjugation pathway</keyword>
<protein>
    <recommendedName>
        <fullName evidence="4">Kelch-like protein 22</fullName>
    </recommendedName>
</protein>
<accession>D3ZZC3</accession>
<accession>D4A9W5</accession>
<sequence>MAEEQDFAQLCKLSTQPSHSHCVNNTYRSTQHSQALLRGLLALRDSGILFDVVLVVEGRHIEAHRILLAASCDYFRGMFAGGLKEMEQEEVLIHGVSYNAMCQILHFIYTSELELSLSNVQETLVAACQLQIPEIIHFCCDFLMSWVDEENILDVYRLAELFDLNRLTQQLDTYILKNFVAFSRTDKYRQLPLEKVYSLLSSNRLEVSCETEVYEGALLYHYSMEQVQADQISLHEPPKLLETVRFPLMEAEVLQRLHDKLGPSPLRDTVASALMYHRNESLQPSLQGPHTELRSDFQCVVGFGGIHSTPSTILSDQAKYLNPLLGEWKHFTASLAPRMSNQGIAVLNNFVYLIGGDNNVQGFRAESRCWRYDPRHNRWFQIQSLQQEHADLCVCVVGKYIYAVAGRDYHNNLSAVERYDPATNSWEYVAPLKKEVYAHAGTTLQGKMYITCGRRGEDYLKETHCYDPGSNTWHTLADGPVRRAWHGMAALLDKLFVIGGSNNDAGYRRDVHQVACYSCTSRQWSSVCPLPAGHGEPGIAVLDNRIYVLGGRSHNRGSRTGYVHIYDMEKDCWEEGPQLNNSISGLAACVLTLPRSLLHEQPRGTPNRSQADADFASEVMSVSDWEEFDNSSED</sequence>